<organism>
    <name type="scientific">Rattus norvegicus</name>
    <name type="common">Rat</name>
    <dbReference type="NCBI Taxonomy" id="10116"/>
    <lineage>
        <taxon>Eukaryota</taxon>
        <taxon>Metazoa</taxon>
        <taxon>Chordata</taxon>
        <taxon>Craniata</taxon>
        <taxon>Vertebrata</taxon>
        <taxon>Euteleostomi</taxon>
        <taxon>Mammalia</taxon>
        <taxon>Eutheria</taxon>
        <taxon>Euarchontoglires</taxon>
        <taxon>Glires</taxon>
        <taxon>Rodentia</taxon>
        <taxon>Myomorpha</taxon>
        <taxon>Muroidea</taxon>
        <taxon>Muridae</taxon>
        <taxon>Murinae</taxon>
        <taxon>Rattus</taxon>
    </lineage>
</organism>
<accession>P81828</accession>
<proteinExistence type="evidence at protein level"/>
<dbReference type="EMBL" id="AA945091">
    <property type="status" value="NOT_ANNOTATED_CDS"/>
    <property type="molecule type" value="mRNA"/>
</dbReference>
<dbReference type="RefSeq" id="NP_001395991.2">
    <property type="nucleotide sequence ID" value="NM_001409062.2"/>
</dbReference>
<dbReference type="SMR" id="P81828"/>
<dbReference type="GlyGen" id="P81828">
    <property type="glycosylation" value="2 sites"/>
</dbReference>
<dbReference type="GeneID" id="103693047"/>
<dbReference type="AGR" id="RGD:9251694"/>
<dbReference type="InParanoid" id="P81828"/>
<dbReference type="PRO" id="PR:P81828"/>
<dbReference type="Proteomes" id="UP000002494">
    <property type="component" value="Unplaced"/>
</dbReference>
<dbReference type="GO" id="GO:0005576">
    <property type="term" value="C:extracellular region"/>
    <property type="evidence" value="ECO:0007669"/>
    <property type="project" value="UniProtKB-SubCell"/>
</dbReference>
<dbReference type="GO" id="GO:0005886">
    <property type="term" value="C:plasma membrane"/>
    <property type="evidence" value="ECO:0000318"/>
    <property type="project" value="GO_Central"/>
</dbReference>
<dbReference type="GO" id="GO:0001848">
    <property type="term" value="F:complement binding"/>
    <property type="evidence" value="ECO:0000318"/>
    <property type="project" value="GO_Central"/>
</dbReference>
<dbReference type="GO" id="GO:0001971">
    <property type="term" value="P:negative regulation of activation of membrane attack complex"/>
    <property type="evidence" value="ECO:0000318"/>
    <property type="project" value="GO_Central"/>
</dbReference>
<dbReference type="CDD" id="cd23627">
    <property type="entry name" value="TFP_LU_ECD_UP"/>
    <property type="match status" value="1"/>
</dbReference>
<dbReference type="InterPro" id="IPR016054">
    <property type="entry name" value="LY6_UPA_recep-like"/>
</dbReference>
<dbReference type="Pfam" id="PF00021">
    <property type="entry name" value="UPAR_LY6"/>
    <property type="match status" value="1"/>
</dbReference>
<evidence type="ECO:0000255" key="1"/>
<evidence type="ECO:0000269" key="2">
    <source>
    </source>
</evidence>
<evidence type="ECO:0000305" key="3"/>
<feature type="signal peptide" evidence="2">
    <location>
        <begin position="1"/>
        <end position="21"/>
    </location>
</feature>
<feature type="chain" id="PRO_0000036170" description="Urinary protein 2">
    <location>
        <begin position="22"/>
        <end position="101"/>
    </location>
</feature>
<feature type="domain" description="UPAR/Ly6" evidence="3">
    <location>
        <begin position="22"/>
        <end position="99"/>
    </location>
</feature>
<feature type="glycosylation site" description="N-linked (GlcNAc...) asparagine" evidence="1">
    <location>
        <position position="67"/>
    </location>
</feature>
<feature type="glycosylation site" description="N-linked (GlcNAc...) asparagine" evidence="1">
    <location>
        <position position="74"/>
    </location>
</feature>
<feature type="disulfide bond" evidence="1">
    <location>
        <begin position="24"/>
        <end position="51"/>
    </location>
</feature>
<feature type="disulfide bond" evidence="1">
    <location>
        <begin position="27"/>
        <end position="36"/>
    </location>
</feature>
<feature type="disulfide bond" evidence="1">
    <location>
        <begin position="43"/>
        <end position="70"/>
    </location>
</feature>
<feature type="disulfide bond" evidence="1">
    <location>
        <begin position="73"/>
        <end position="89"/>
    </location>
</feature>
<feature type="disulfide bond" evidence="1">
    <location>
        <begin position="90"/>
        <end position="96"/>
    </location>
</feature>
<sequence>MGKHILLLPLGLSLLMSSLLALQCFRCTSFDSTGFCHVGRQKCQTYPDEICAWVVVTTRDGKFVYGNQSCAECNATTVEHGSLIVSTNCCSATPFCNMVHR</sequence>
<reference key="1">
    <citation type="submission" date="1998-05" db="EMBL/GenBank/DDBJ databases">
        <authorList>
            <person name="Lee N.H."/>
            <person name="Glodek A."/>
            <person name="Chandra I."/>
            <person name="Mason T.M."/>
            <person name="Quackenbush J."/>
            <person name="Kerlavage A.R."/>
            <person name="Adams M.D."/>
        </authorList>
    </citation>
    <scope>NUCLEOTIDE SEQUENCE [MRNA]</scope>
</reference>
<reference key="2">
    <citation type="journal article" date="2002" name="Proteomics">
        <title>The characterisation of novel secreted Ly-6 proteins from rat urine by the combined use of two-dimensional gel electrophoresis, microbore high performance liquid chromatography and expressed sequence tag data.</title>
        <authorList>
            <person name="Southan C."/>
            <person name="Cutler P."/>
            <person name="Birrell H."/>
            <person name="Connell J."/>
            <person name="Fantom K.G.M."/>
            <person name="Sims M."/>
            <person name="Shaikh N."/>
            <person name="Schneider K."/>
        </authorList>
    </citation>
    <scope>IDENTIFICATION</scope>
    <scope>PROTEIN SEQUENCE OF 22-47</scope>
    <source>
        <tissue>Urine</tissue>
    </source>
</reference>
<reference key="3">
    <citation type="journal article" date="2001" name="Electrophoresis">
        <title>Proteins of rat serum, urine, and cerebrospinal fluid: VI. Further protein identifications and interstrain comparison.</title>
        <authorList>
            <person name="Wait R."/>
            <person name="Gianazza E."/>
            <person name="Eberini I."/>
            <person name="Sironi L."/>
            <person name="Dunn M.J."/>
            <person name="Gemeiner M."/>
            <person name="Miller I."/>
        </authorList>
    </citation>
    <scope>PROTEIN SEQUENCE OF 27-40</scope>
</reference>
<comment type="subcellular location">
    <subcellularLocation>
        <location>Secreted</location>
    </subcellularLocation>
</comment>
<comment type="PTM">
    <text evidence="3">N-glycosylated.</text>
</comment>
<name>UP2_RAT</name>
<keyword id="KW-0903">Direct protein sequencing</keyword>
<keyword id="KW-1015">Disulfide bond</keyword>
<keyword id="KW-0325">Glycoprotein</keyword>
<keyword id="KW-1185">Reference proteome</keyword>
<keyword id="KW-0964">Secreted</keyword>
<keyword id="KW-0732">Signal</keyword>
<protein>
    <recommendedName>
        <fullName>Urinary protein 2</fullName>
        <shortName>UP-2</shortName>
        <shortName>rUP-2</shortName>
    </recommendedName>
</protein>